<feature type="chain" id="PRO_0000048431" description="Tubulin beta-1 chain">
    <location>
        <begin position="1"/>
        <end position="446"/>
    </location>
</feature>
<feature type="binding site" evidence="2">
    <location>
        <position position="11"/>
    </location>
    <ligand>
        <name>GTP</name>
        <dbReference type="ChEBI" id="CHEBI:37565"/>
    </ligand>
</feature>
<feature type="binding site" evidence="1">
    <location>
        <position position="69"/>
    </location>
    <ligand>
        <name>GTP</name>
        <dbReference type="ChEBI" id="CHEBI:37565"/>
    </ligand>
</feature>
<feature type="binding site" evidence="1">
    <location>
        <position position="69"/>
    </location>
    <ligand>
        <name>Mg(2+)</name>
        <dbReference type="ChEBI" id="CHEBI:18420"/>
    </ligand>
</feature>
<feature type="binding site" evidence="2">
    <location>
        <position position="138"/>
    </location>
    <ligand>
        <name>GTP</name>
        <dbReference type="ChEBI" id="CHEBI:37565"/>
    </ligand>
</feature>
<feature type="binding site" evidence="2">
    <location>
        <position position="142"/>
    </location>
    <ligand>
        <name>GTP</name>
        <dbReference type="ChEBI" id="CHEBI:37565"/>
    </ligand>
</feature>
<feature type="binding site" evidence="2">
    <location>
        <position position="143"/>
    </location>
    <ligand>
        <name>GTP</name>
        <dbReference type="ChEBI" id="CHEBI:37565"/>
    </ligand>
</feature>
<feature type="binding site" evidence="2">
    <location>
        <position position="144"/>
    </location>
    <ligand>
        <name>GTP</name>
        <dbReference type="ChEBI" id="CHEBI:37565"/>
    </ligand>
</feature>
<feature type="binding site" evidence="2">
    <location>
        <position position="204"/>
    </location>
    <ligand>
        <name>GTP</name>
        <dbReference type="ChEBI" id="CHEBI:37565"/>
    </ligand>
</feature>
<feature type="binding site" evidence="2">
    <location>
        <position position="226"/>
    </location>
    <ligand>
        <name>GTP</name>
        <dbReference type="ChEBI" id="CHEBI:37565"/>
    </ligand>
</feature>
<accession>Q6EVK8</accession>
<reference key="1">
    <citation type="journal article" date="2005" name="Curr. Genet.">
        <title>Two phylogenetically highly distinct beta-tubulin genes of the basidiomycete Suillus bovinus.</title>
        <authorList>
            <person name="Juuti J.T."/>
            <person name="Jokela S."/>
            <person name="Tarkka M.T."/>
            <person name="Paulin L."/>
            <person name="Lahdensalo J."/>
        </authorList>
    </citation>
    <scope>NUCLEOTIDE SEQUENCE [GENOMIC DNA]</scope>
    <source>
        <strain>SBH1</strain>
    </source>
</reference>
<organism>
    <name type="scientific">Suillus bovinus</name>
    <name type="common">Jersey cow bolete</name>
    <name type="synonym">Boletus bovinus</name>
    <dbReference type="NCBI Taxonomy" id="48563"/>
    <lineage>
        <taxon>Eukaryota</taxon>
        <taxon>Fungi</taxon>
        <taxon>Dikarya</taxon>
        <taxon>Basidiomycota</taxon>
        <taxon>Agaricomycotina</taxon>
        <taxon>Agaricomycetes</taxon>
        <taxon>Agaricomycetidae</taxon>
        <taxon>Boletales</taxon>
        <taxon>Suillineae</taxon>
        <taxon>Suillaceae</taxon>
        <taxon>Suillus</taxon>
    </lineage>
</organism>
<proteinExistence type="inferred from homology"/>
<gene>
    <name type="primary">TUBB1</name>
</gene>
<sequence>MREIVHIQTGQCGNQIGAKFWEVVSDEHGIERDGLYKGTNDMQLERISVYYNEIGSNKYVPRAVLVDLEPGTMDSVRSGPLGGLFRPDNFIFGQSGAGNNWAKGHYTEGAELVDSVLDVVRKEAEGTDCLQGFQITHSLGGGTGAGMGTLLMSKIREEYPDRMMCTYSVVPSPAVSDTVVEPYNATLSVHQLVENSDETFCIDNEALYDICFRTLKLSTPTYGDLNHLVSFVMSGITTCLRFPGQLNSDLRKLAVNMVPFPRLHFFMTGFAPLTARGSQQYRAVTVPELTQQMFDAKNMMAASDPRHGRYLTVAAVFRGKVSMKEVEEQMQNVQNKNSAYFVEWIPNNVLSAQCDIPPRGVKMAVTFLGNSTAIQELFKRVSDHFTAMFKRKAFLHWYTQEGMDEMEFTEAESNMQDLIAEYQQYQDATVEEEAEYEEEVPADEES</sequence>
<dbReference type="EMBL" id="AJ698040">
    <property type="protein sequence ID" value="CAG27308.1"/>
    <property type="molecule type" value="Genomic_DNA"/>
</dbReference>
<dbReference type="SMR" id="Q6EVK8"/>
<dbReference type="OrthoDB" id="1662883at2759"/>
<dbReference type="GO" id="GO:0005737">
    <property type="term" value="C:cytoplasm"/>
    <property type="evidence" value="ECO:0007669"/>
    <property type="project" value="UniProtKB-KW"/>
</dbReference>
<dbReference type="GO" id="GO:0005874">
    <property type="term" value="C:microtubule"/>
    <property type="evidence" value="ECO:0007669"/>
    <property type="project" value="UniProtKB-KW"/>
</dbReference>
<dbReference type="GO" id="GO:0005525">
    <property type="term" value="F:GTP binding"/>
    <property type="evidence" value="ECO:0007669"/>
    <property type="project" value="UniProtKB-KW"/>
</dbReference>
<dbReference type="GO" id="GO:0003924">
    <property type="term" value="F:GTPase activity"/>
    <property type="evidence" value="ECO:0007669"/>
    <property type="project" value="InterPro"/>
</dbReference>
<dbReference type="GO" id="GO:0046872">
    <property type="term" value="F:metal ion binding"/>
    <property type="evidence" value="ECO:0007669"/>
    <property type="project" value="UniProtKB-KW"/>
</dbReference>
<dbReference type="GO" id="GO:0005200">
    <property type="term" value="F:structural constituent of cytoskeleton"/>
    <property type="evidence" value="ECO:0007669"/>
    <property type="project" value="InterPro"/>
</dbReference>
<dbReference type="GO" id="GO:0007017">
    <property type="term" value="P:microtubule-based process"/>
    <property type="evidence" value="ECO:0007669"/>
    <property type="project" value="InterPro"/>
</dbReference>
<dbReference type="CDD" id="cd02187">
    <property type="entry name" value="beta_tubulin"/>
    <property type="match status" value="1"/>
</dbReference>
<dbReference type="FunFam" id="1.10.287.600:FF:000006">
    <property type="entry name" value="Tubulin beta chain"/>
    <property type="match status" value="1"/>
</dbReference>
<dbReference type="FunFam" id="3.30.1330.20:FF:000002">
    <property type="entry name" value="Tubulin beta chain"/>
    <property type="match status" value="1"/>
</dbReference>
<dbReference type="FunFam" id="3.40.50.1440:FF:000003">
    <property type="entry name" value="Tubulin beta chain"/>
    <property type="match status" value="1"/>
</dbReference>
<dbReference type="Gene3D" id="1.10.287.600">
    <property type="entry name" value="Helix hairpin bin"/>
    <property type="match status" value="1"/>
</dbReference>
<dbReference type="Gene3D" id="3.30.1330.20">
    <property type="entry name" value="Tubulin/FtsZ, C-terminal domain"/>
    <property type="match status" value="1"/>
</dbReference>
<dbReference type="Gene3D" id="3.40.50.1440">
    <property type="entry name" value="Tubulin/FtsZ, GTPase domain"/>
    <property type="match status" value="1"/>
</dbReference>
<dbReference type="InterPro" id="IPR013838">
    <property type="entry name" value="Beta-tubulin_BS"/>
</dbReference>
<dbReference type="InterPro" id="IPR002453">
    <property type="entry name" value="Beta_tubulin"/>
</dbReference>
<dbReference type="InterPro" id="IPR008280">
    <property type="entry name" value="Tub_FtsZ_C"/>
</dbReference>
<dbReference type="InterPro" id="IPR000217">
    <property type="entry name" value="Tubulin"/>
</dbReference>
<dbReference type="InterPro" id="IPR037103">
    <property type="entry name" value="Tubulin/FtsZ-like_C"/>
</dbReference>
<dbReference type="InterPro" id="IPR018316">
    <property type="entry name" value="Tubulin/FtsZ_2-layer-sand-dom"/>
</dbReference>
<dbReference type="InterPro" id="IPR036525">
    <property type="entry name" value="Tubulin/FtsZ_GTPase_sf"/>
</dbReference>
<dbReference type="InterPro" id="IPR023123">
    <property type="entry name" value="Tubulin_C"/>
</dbReference>
<dbReference type="InterPro" id="IPR017975">
    <property type="entry name" value="Tubulin_CS"/>
</dbReference>
<dbReference type="InterPro" id="IPR003008">
    <property type="entry name" value="Tubulin_FtsZ_GTPase"/>
</dbReference>
<dbReference type="PANTHER" id="PTHR11588">
    <property type="entry name" value="TUBULIN"/>
    <property type="match status" value="1"/>
</dbReference>
<dbReference type="Pfam" id="PF00091">
    <property type="entry name" value="Tubulin"/>
    <property type="match status" value="1"/>
</dbReference>
<dbReference type="Pfam" id="PF03953">
    <property type="entry name" value="Tubulin_C"/>
    <property type="match status" value="1"/>
</dbReference>
<dbReference type="PRINTS" id="PR01163">
    <property type="entry name" value="BETATUBULIN"/>
</dbReference>
<dbReference type="PRINTS" id="PR01161">
    <property type="entry name" value="TUBULIN"/>
</dbReference>
<dbReference type="SMART" id="SM00864">
    <property type="entry name" value="Tubulin"/>
    <property type="match status" value="1"/>
</dbReference>
<dbReference type="SMART" id="SM00865">
    <property type="entry name" value="Tubulin_C"/>
    <property type="match status" value="1"/>
</dbReference>
<dbReference type="SUPFAM" id="SSF55307">
    <property type="entry name" value="Tubulin C-terminal domain-like"/>
    <property type="match status" value="1"/>
</dbReference>
<dbReference type="SUPFAM" id="SSF52490">
    <property type="entry name" value="Tubulin nucleotide-binding domain-like"/>
    <property type="match status" value="1"/>
</dbReference>
<dbReference type="PROSITE" id="PS00227">
    <property type="entry name" value="TUBULIN"/>
    <property type="match status" value="1"/>
</dbReference>
<dbReference type="PROSITE" id="PS00228">
    <property type="entry name" value="TUBULIN_B_AUTOREG"/>
    <property type="match status" value="1"/>
</dbReference>
<keyword id="KW-0963">Cytoplasm</keyword>
<keyword id="KW-0206">Cytoskeleton</keyword>
<keyword id="KW-0342">GTP-binding</keyword>
<keyword id="KW-0460">Magnesium</keyword>
<keyword id="KW-0479">Metal-binding</keyword>
<keyword id="KW-0493">Microtubule</keyword>
<keyword id="KW-0547">Nucleotide-binding</keyword>
<protein>
    <recommendedName>
        <fullName>Tubulin beta-1 chain</fullName>
    </recommendedName>
    <alternativeName>
        <fullName>Beta-1-tubulin</fullName>
    </alternativeName>
</protein>
<comment type="function">
    <text>Tubulin is the major constituent of microtubules, a cylinder consisting of laterally associated linear protofilaments composed of alpha- and beta-tubulin heterodimers. Microtubules grow by the addition of GTP-tubulin dimers to the microtubule end, where a stabilizing cap forms. Below the cap, tubulin dimers are in GDP-bound state, owing to GTPase activity of alpha-tubulin.</text>
</comment>
<comment type="cofactor">
    <cofactor evidence="1">
        <name>Mg(2+)</name>
        <dbReference type="ChEBI" id="CHEBI:18420"/>
    </cofactor>
</comment>
<comment type="subunit">
    <text>Dimer of alpha and beta chains. A typical microtubule is a hollow water-filled tube with an outer diameter of 25 nm and an inner diameter of 15 nM. Alpha-beta heterodimers associate head-to-tail to form protofilaments running lengthwise along the microtubule wall with the beta-tubulin subunit facing the microtubule plus end conferring a structural polarity. Microtubules usually have 13 protofilaments but different protofilament numbers can be found in some organisms and specialized cells.</text>
</comment>
<comment type="subcellular location">
    <subcellularLocation>
        <location>Cytoplasm</location>
        <location>Cytoskeleton</location>
    </subcellularLocation>
</comment>
<comment type="similarity">
    <text evidence="3">Belongs to the tubulin family.</text>
</comment>
<evidence type="ECO:0000250" key="1">
    <source>
        <dbReference type="UniProtKB" id="P68363"/>
    </source>
</evidence>
<evidence type="ECO:0000250" key="2">
    <source>
        <dbReference type="UniProtKB" id="Q13509"/>
    </source>
</evidence>
<evidence type="ECO:0000305" key="3"/>
<name>TBB1_SUIBO</name>